<reference key="1">
    <citation type="journal article" date="2009" name="Proc. Natl. Acad. Sci. U.S.A.">
        <title>The mosaic genome structure of the Wolbachia wRi strain infecting Drosophila simulans.</title>
        <authorList>
            <person name="Klasson L."/>
            <person name="Westberg J."/>
            <person name="Sapountzis P."/>
            <person name="Naeslund K."/>
            <person name="Lutnaes Y."/>
            <person name="Darby A.C."/>
            <person name="Veneti Z."/>
            <person name="Chen L."/>
            <person name="Braig H.R."/>
            <person name="Garrett R."/>
            <person name="Bourtzis K."/>
            <person name="Andersson S.G."/>
        </authorList>
    </citation>
    <scope>NUCLEOTIDE SEQUENCE [LARGE SCALE GENOMIC DNA]</scope>
    <source>
        <strain>wRi</strain>
    </source>
</reference>
<organism>
    <name type="scientific">Wolbachia sp. subsp. Drosophila simulans (strain wRi)</name>
    <dbReference type="NCBI Taxonomy" id="66084"/>
    <lineage>
        <taxon>Bacteria</taxon>
        <taxon>Pseudomonadati</taxon>
        <taxon>Pseudomonadota</taxon>
        <taxon>Alphaproteobacteria</taxon>
        <taxon>Rickettsiales</taxon>
        <taxon>Anaplasmataceae</taxon>
        <taxon>Wolbachieae</taxon>
        <taxon>Wolbachia</taxon>
    </lineage>
</organism>
<dbReference type="EMBL" id="CP001391">
    <property type="protein sequence ID" value="ACN95156.1"/>
    <property type="molecule type" value="Genomic_DNA"/>
</dbReference>
<dbReference type="RefSeq" id="WP_007549205.1">
    <property type="nucleotide sequence ID" value="NZ_MKIF01000165.1"/>
</dbReference>
<dbReference type="SMR" id="C0R2L4"/>
<dbReference type="STRING" id="66084.WRi_003450"/>
<dbReference type="KEGG" id="wri:WRi_003450"/>
<dbReference type="HOGENOM" id="CLU_047155_0_0_5"/>
<dbReference type="Proteomes" id="UP000001293">
    <property type="component" value="Chromosome"/>
</dbReference>
<dbReference type="GO" id="GO:0005737">
    <property type="term" value="C:cytoplasm"/>
    <property type="evidence" value="ECO:0007669"/>
    <property type="project" value="UniProtKB-SubCell"/>
</dbReference>
<dbReference type="GO" id="GO:0003746">
    <property type="term" value="F:translation elongation factor activity"/>
    <property type="evidence" value="ECO:0007669"/>
    <property type="project" value="UniProtKB-UniRule"/>
</dbReference>
<dbReference type="CDD" id="cd14275">
    <property type="entry name" value="UBA_EF-Ts"/>
    <property type="match status" value="1"/>
</dbReference>
<dbReference type="FunFam" id="1.10.8.10:FF:000001">
    <property type="entry name" value="Elongation factor Ts"/>
    <property type="match status" value="1"/>
</dbReference>
<dbReference type="Gene3D" id="1.10.286.20">
    <property type="match status" value="1"/>
</dbReference>
<dbReference type="Gene3D" id="1.10.8.10">
    <property type="entry name" value="DNA helicase RuvA subunit, C-terminal domain"/>
    <property type="match status" value="1"/>
</dbReference>
<dbReference type="Gene3D" id="3.30.479.20">
    <property type="entry name" value="Elongation factor Ts, dimerisation domain"/>
    <property type="match status" value="2"/>
</dbReference>
<dbReference type="HAMAP" id="MF_00050">
    <property type="entry name" value="EF_Ts"/>
    <property type="match status" value="1"/>
</dbReference>
<dbReference type="InterPro" id="IPR036402">
    <property type="entry name" value="EF-Ts_dimer_sf"/>
</dbReference>
<dbReference type="InterPro" id="IPR001816">
    <property type="entry name" value="Transl_elong_EFTs/EF1B"/>
</dbReference>
<dbReference type="InterPro" id="IPR014039">
    <property type="entry name" value="Transl_elong_EFTs/EF1B_dimer"/>
</dbReference>
<dbReference type="InterPro" id="IPR018101">
    <property type="entry name" value="Transl_elong_Ts_CS"/>
</dbReference>
<dbReference type="InterPro" id="IPR009060">
    <property type="entry name" value="UBA-like_sf"/>
</dbReference>
<dbReference type="NCBIfam" id="TIGR00116">
    <property type="entry name" value="tsf"/>
    <property type="match status" value="1"/>
</dbReference>
<dbReference type="PANTHER" id="PTHR11741">
    <property type="entry name" value="ELONGATION FACTOR TS"/>
    <property type="match status" value="1"/>
</dbReference>
<dbReference type="PANTHER" id="PTHR11741:SF0">
    <property type="entry name" value="ELONGATION FACTOR TS, MITOCHONDRIAL"/>
    <property type="match status" value="1"/>
</dbReference>
<dbReference type="Pfam" id="PF00889">
    <property type="entry name" value="EF_TS"/>
    <property type="match status" value="1"/>
</dbReference>
<dbReference type="SUPFAM" id="SSF54713">
    <property type="entry name" value="Elongation factor Ts (EF-Ts), dimerisation domain"/>
    <property type="match status" value="2"/>
</dbReference>
<dbReference type="SUPFAM" id="SSF46934">
    <property type="entry name" value="UBA-like"/>
    <property type="match status" value="1"/>
</dbReference>
<dbReference type="PROSITE" id="PS01126">
    <property type="entry name" value="EF_TS_1"/>
    <property type="match status" value="1"/>
</dbReference>
<dbReference type="PROSITE" id="PS01127">
    <property type="entry name" value="EF_TS_2"/>
    <property type="match status" value="1"/>
</dbReference>
<name>EFTS_WOLWR</name>
<comment type="function">
    <text evidence="1">Associates with the EF-Tu.GDP complex and induces the exchange of GDP to GTP. It remains bound to the aminoacyl-tRNA.EF-Tu.GTP complex up to the GTP hydrolysis stage on the ribosome.</text>
</comment>
<comment type="subcellular location">
    <subcellularLocation>
        <location evidence="1">Cytoplasm</location>
    </subcellularLocation>
</comment>
<comment type="similarity">
    <text evidence="1">Belongs to the EF-Ts family.</text>
</comment>
<feature type="chain" id="PRO_1000117611" description="Elongation factor Ts">
    <location>
        <begin position="1"/>
        <end position="286"/>
    </location>
</feature>
<feature type="region of interest" description="Involved in Mg(2+) ion dislocation from EF-Tu" evidence="1">
    <location>
        <begin position="79"/>
        <end position="82"/>
    </location>
</feature>
<keyword id="KW-0963">Cytoplasm</keyword>
<keyword id="KW-0251">Elongation factor</keyword>
<keyword id="KW-0648">Protein biosynthesis</keyword>
<accession>C0R2L4</accession>
<gene>
    <name evidence="1" type="primary">tsf</name>
    <name type="ordered locus">WRi_003450</name>
</gene>
<proteinExistence type="inferred from homology"/>
<sequence length="286" mass="31495">MKMNPDDIRELRDRTGLGLSDCKKALEECDGDIKKAVDKLRTIGLAKADKKSDRVASDGLVAMCLTENCGVLIELNCETDFVARNEKFIELVLNLASIAHQERCTSVDELKNAKYESIGTVQEAIMNGTSVLGEKLELSKLCYLEAKDGVIAGYVHGDVCGLGKIGALIALQSPGDKAKLQEIGKQIAMHIVAMKPEALSIDDLDQMKLKNERSIIEEQVRSLNKPEEVAKKIVDGRMAKYYEEVVLLEQKFIKDDKMKVSDFIKSSEVSAVKLSNYKLLVLGGAN</sequence>
<evidence type="ECO:0000255" key="1">
    <source>
        <dbReference type="HAMAP-Rule" id="MF_00050"/>
    </source>
</evidence>
<protein>
    <recommendedName>
        <fullName evidence="1">Elongation factor Ts</fullName>
        <shortName evidence="1">EF-Ts</shortName>
    </recommendedName>
</protein>